<organism>
    <name type="scientific">Cutibacterium acnes (strain DSM 16379 / KPA171202)</name>
    <name type="common">Propionibacterium acnes</name>
    <dbReference type="NCBI Taxonomy" id="267747"/>
    <lineage>
        <taxon>Bacteria</taxon>
        <taxon>Bacillati</taxon>
        <taxon>Actinomycetota</taxon>
        <taxon>Actinomycetes</taxon>
        <taxon>Propionibacteriales</taxon>
        <taxon>Propionibacteriaceae</taxon>
        <taxon>Cutibacterium</taxon>
    </lineage>
</organism>
<proteinExistence type="inferred from homology"/>
<sequence>MALLAPGTPIREGLDRIVNGRTGGLIVLGDGPEINGVCSGGFPLDVRLTPQALRELSKMDGGLVVSSDHERIKAAAVHFVPDGSLPTLETGTRHRTADRLSQQTGVPVVVVSASMSVMSLFLNGRRYLIERPEQLLARANQALATLASYRGRLVDEAENLTTLEIRDQVQVRDVAAVAQRVEMWRRIDAEVRGYVSALGVEGRLVQLQRNELSLGVEDLGRLLTDDYRPNSVAPGGFSLSGLQKLSWEDLLNVTMVAETINLGPAEHPLDSPIRARGHRQLTLMTDLSSRTIQRIIDHFSDLQSLVSASTSELGDIKGVGLRRAREIRQGLESIFEGDQRTHHH</sequence>
<protein>
    <recommendedName>
        <fullName evidence="1">DNA integrity scanning protein DisA</fullName>
    </recommendedName>
    <alternativeName>
        <fullName evidence="1">Cyclic di-AMP synthase</fullName>
        <shortName evidence="1">c-di-AMP synthase</shortName>
    </alternativeName>
    <alternativeName>
        <fullName evidence="1">Diadenylate cyclase</fullName>
        <ecNumber evidence="1">2.7.7.85</ecNumber>
    </alternativeName>
</protein>
<feature type="chain" id="PRO_0000255649" description="DNA integrity scanning protein DisA">
    <location>
        <begin position="1"/>
        <end position="344"/>
    </location>
</feature>
<feature type="domain" description="DAC" evidence="2">
    <location>
        <begin position="1"/>
        <end position="133"/>
    </location>
</feature>
<feature type="binding site" evidence="1">
    <location>
        <position position="61"/>
    </location>
    <ligand>
        <name>ATP</name>
        <dbReference type="ChEBI" id="CHEBI:30616"/>
    </ligand>
</feature>
<feature type="binding site" evidence="1">
    <location>
        <begin position="92"/>
        <end position="96"/>
    </location>
    <ligand>
        <name>ATP</name>
        <dbReference type="ChEBI" id="CHEBI:30616"/>
    </ligand>
</feature>
<keyword id="KW-0067">ATP-binding</keyword>
<keyword id="KW-0227">DNA damage</keyword>
<keyword id="KW-0234">DNA repair</keyword>
<keyword id="KW-0238">DNA-binding</keyword>
<keyword id="KW-0460">Magnesium</keyword>
<keyword id="KW-0547">Nucleotide-binding</keyword>
<keyword id="KW-0548">Nucleotidyltransferase</keyword>
<keyword id="KW-0808">Transferase</keyword>
<evidence type="ECO:0000255" key="1">
    <source>
        <dbReference type="HAMAP-Rule" id="MF_01438"/>
    </source>
</evidence>
<evidence type="ECO:0000255" key="2">
    <source>
        <dbReference type="PROSITE-ProRule" id="PRU01130"/>
    </source>
</evidence>
<comment type="function">
    <text evidence="1">Participates in a DNA-damage check-point. DisA forms globular foci that rapidly scan along the chromosomes searching for lesions.</text>
</comment>
<comment type="function">
    <text evidence="1">Also has diadenylate cyclase activity, catalyzing the condensation of 2 ATP molecules into cyclic di-AMP (c-di-AMP). c-di-AMP likely acts as a signaling molecule that may couple DNA integrity with a cellular process.</text>
</comment>
<comment type="catalytic activity">
    <reaction evidence="1">
        <text>2 ATP = 3',3'-c-di-AMP + 2 diphosphate</text>
        <dbReference type="Rhea" id="RHEA:35655"/>
        <dbReference type="ChEBI" id="CHEBI:30616"/>
        <dbReference type="ChEBI" id="CHEBI:33019"/>
        <dbReference type="ChEBI" id="CHEBI:71500"/>
        <dbReference type="EC" id="2.7.7.85"/>
    </reaction>
</comment>
<comment type="cofactor">
    <cofactor evidence="1">
        <name>Mg(2+)</name>
        <dbReference type="ChEBI" id="CHEBI:18420"/>
    </cofactor>
</comment>
<comment type="subunit">
    <text evidence="1">Homooctamer.</text>
</comment>
<comment type="similarity">
    <text evidence="1">Belongs to the DisA family.</text>
</comment>
<accession>Q6AAZ9</accession>
<dbReference type="EC" id="2.7.7.85" evidence="1"/>
<dbReference type="EMBL" id="AE017283">
    <property type="protein sequence ID" value="AAT82067.1"/>
    <property type="molecule type" value="Genomic_DNA"/>
</dbReference>
<dbReference type="SMR" id="Q6AAZ9"/>
<dbReference type="EnsemblBacteria" id="AAT82067">
    <property type="protein sequence ID" value="AAT82067"/>
    <property type="gene ID" value="PPA0311"/>
</dbReference>
<dbReference type="KEGG" id="pac:PPA0311"/>
<dbReference type="eggNOG" id="COG1623">
    <property type="taxonomic scope" value="Bacteria"/>
</dbReference>
<dbReference type="HOGENOM" id="CLU_787128_0_0_11"/>
<dbReference type="Proteomes" id="UP000000603">
    <property type="component" value="Chromosome"/>
</dbReference>
<dbReference type="GO" id="GO:0004016">
    <property type="term" value="F:adenylate cyclase activity"/>
    <property type="evidence" value="ECO:0007669"/>
    <property type="project" value="TreeGrafter"/>
</dbReference>
<dbReference type="GO" id="GO:0005524">
    <property type="term" value="F:ATP binding"/>
    <property type="evidence" value="ECO:0007669"/>
    <property type="project" value="UniProtKB-UniRule"/>
</dbReference>
<dbReference type="GO" id="GO:0106408">
    <property type="term" value="F:diadenylate cyclase activity"/>
    <property type="evidence" value="ECO:0007669"/>
    <property type="project" value="UniProtKB-EC"/>
</dbReference>
<dbReference type="GO" id="GO:0003677">
    <property type="term" value="F:DNA binding"/>
    <property type="evidence" value="ECO:0007669"/>
    <property type="project" value="UniProtKB-UniRule"/>
</dbReference>
<dbReference type="GO" id="GO:0006281">
    <property type="term" value="P:DNA repair"/>
    <property type="evidence" value="ECO:0007669"/>
    <property type="project" value="UniProtKB-UniRule"/>
</dbReference>
<dbReference type="Gene3D" id="1.10.150.20">
    <property type="entry name" value="5' to 3' exonuclease, C-terminal subdomain"/>
    <property type="match status" value="1"/>
</dbReference>
<dbReference type="Gene3D" id="1.20.1260.110">
    <property type="entry name" value="DNA integrity scanning linker region"/>
    <property type="match status" value="1"/>
</dbReference>
<dbReference type="Gene3D" id="3.40.1700.10">
    <property type="entry name" value="DNA integrity scanning protein, DisA, N-terminal domain"/>
    <property type="match status" value="1"/>
</dbReference>
<dbReference type="HAMAP" id="MF_01438">
    <property type="entry name" value="DisA"/>
    <property type="match status" value="1"/>
</dbReference>
<dbReference type="InterPro" id="IPR050338">
    <property type="entry name" value="DisA"/>
</dbReference>
<dbReference type="InterPro" id="IPR038331">
    <property type="entry name" value="DisA_sf"/>
</dbReference>
<dbReference type="InterPro" id="IPR036888">
    <property type="entry name" value="DNA_integrity_DisA_N_sf"/>
</dbReference>
<dbReference type="InterPro" id="IPR018906">
    <property type="entry name" value="DNA_integrity_scan_DisA_link"/>
</dbReference>
<dbReference type="InterPro" id="IPR003390">
    <property type="entry name" value="DNA_integrity_scan_DisA_N"/>
</dbReference>
<dbReference type="InterPro" id="IPR023763">
    <property type="entry name" value="DNA_integrity_scanning_protein"/>
</dbReference>
<dbReference type="InterPro" id="IPR010994">
    <property type="entry name" value="RuvA_2-like"/>
</dbReference>
<dbReference type="NCBIfam" id="NF010009">
    <property type="entry name" value="PRK13482.1"/>
    <property type="match status" value="1"/>
</dbReference>
<dbReference type="PANTHER" id="PTHR34185">
    <property type="entry name" value="DIADENYLATE CYCLASE"/>
    <property type="match status" value="1"/>
</dbReference>
<dbReference type="PANTHER" id="PTHR34185:SF3">
    <property type="entry name" value="DNA INTEGRITY SCANNING PROTEIN DISA"/>
    <property type="match status" value="1"/>
</dbReference>
<dbReference type="Pfam" id="PF02457">
    <property type="entry name" value="DAC"/>
    <property type="match status" value="1"/>
</dbReference>
<dbReference type="Pfam" id="PF10635">
    <property type="entry name" value="DisA-linker"/>
    <property type="match status" value="1"/>
</dbReference>
<dbReference type="SUPFAM" id="SSF47781">
    <property type="entry name" value="RuvA domain 2-like"/>
    <property type="match status" value="1"/>
</dbReference>
<dbReference type="SUPFAM" id="SSF143597">
    <property type="entry name" value="YojJ-like"/>
    <property type="match status" value="1"/>
</dbReference>
<dbReference type="PROSITE" id="PS51794">
    <property type="entry name" value="DAC"/>
    <property type="match status" value="1"/>
</dbReference>
<name>DISA_CUTAK</name>
<gene>
    <name evidence="1" type="primary">disA</name>
    <name type="ordered locus">PPA0311</name>
</gene>
<reference key="1">
    <citation type="journal article" date="2004" name="Science">
        <title>The complete genome sequence of Propionibacterium acnes, a commensal of human skin.</title>
        <authorList>
            <person name="Brueggemann H."/>
            <person name="Henne A."/>
            <person name="Hoster F."/>
            <person name="Liesegang H."/>
            <person name="Wiezer A."/>
            <person name="Strittmatter A."/>
            <person name="Hujer S."/>
            <person name="Duerre P."/>
            <person name="Gottschalk G."/>
        </authorList>
    </citation>
    <scope>NUCLEOTIDE SEQUENCE [LARGE SCALE GENOMIC DNA]</scope>
    <source>
        <strain>DSM 16379 / KPA171202</strain>
    </source>
</reference>